<accession>B2TWI5</accession>
<keyword id="KW-0963">Cytoplasm</keyword>
<keyword id="KW-0227">DNA damage</keyword>
<keyword id="KW-0234">DNA repair</keyword>
<keyword id="KW-0255">Endonuclease</keyword>
<keyword id="KW-0378">Hydrolase</keyword>
<keyword id="KW-0460">Magnesium</keyword>
<keyword id="KW-0479">Metal-binding</keyword>
<keyword id="KW-0540">Nuclease</keyword>
<keyword id="KW-1185">Reference proteome</keyword>
<proteinExistence type="inferred from homology"/>
<dbReference type="EC" id="3.1.21.7" evidence="1"/>
<dbReference type="EMBL" id="CP001063">
    <property type="protein sequence ID" value="ACD09384.1"/>
    <property type="molecule type" value="Genomic_DNA"/>
</dbReference>
<dbReference type="RefSeq" id="WP_000362392.1">
    <property type="nucleotide sequence ID" value="NC_010658.1"/>
</dbReference>
<dbReference type="SMR" id="B2TWI5"/>
<dbReference type="STRING" id="344609.SbBS512_E4489"/>
<dbReference type="GeneID" id="93777896"/>
<dbReference type="KEGG" id="sbc:SbBS512_E4489"/>
<dbReference type="HOGENOM" id="CLU_047631_1_0_6"/>
<dbReference type="Proteomes" id="UP000001030">
    <property type="component" value="Chromosome"/>
</dbReference>
<dbReference type="GO" id="GO:0005737">
    <property type="term" value="C:cytoplasm"/>
    <property type="evidence" value="ECO:0007669"/>
    <property type="project" value="UniProtKB-SubCell"/>
</dbReference>
<dbReference type="GO" id="GO:0043737">
    <property type="term" value="F:deoxyribonuclease V activity"/>
    <property type="evidence" value="ECO:0007669"/>
    <property type="project" value="UniProtKB-UniRule"/>
</dbReference>
<dbReference type="GO" id="GO:0000287">
    <property type="term" value="F:magnesium ion binding"/>
    <property type="evidence" value="ECO:0007669"/>
    <property type="project" value="UniProtKB-UniRule"/>
</dbReference>
<dbReference type="GO" id="GO:0016891">
    <property type="term" value="F:RNA endonuclease activity, producing 5'-phosphomonoesters"/>
    <property type="evidence" value="ECO:0007669"/>
    <property type="project" value="TreeGrafter"/>
</dbReference>
<dbReference type="GO" id="GO:0003727">
    <property type="term" value="F:single-stranded RNA binding"/>
    <property type="evidence" value="ECO:0007669"/>
    <property type="project" value="TreeGrafter"/>
</dbReference>
<dbReference type="GO" id="GO:0006281">
    <property type="term" value="P:DNA repair"/>
    <property type="evidence" value="ECO:0007669"/>
    <property type="project" value="UniProtKB-UniRule"/>
</dbReference>
<dbReference type="CDD" id="cd06559">
    <property type="entry name" value="Endonuclease_V"/>
    <property type="match status" value="1"/>
</dbReference>
<dbReference type="FunFam" id="3.30.2170.10:FF:000001">
    <property type="entry name" value="Endonuclease V"/>
    <property type="match status" value="1"/>
</dbReference>
<dbReference type="Gene3D" id="3.30.2170.10">
    <property type="entry name" value="archaeoglobus fulgidus dsm 4304 superfamily"/>
    <property type="match status" value="1"/>
</dbReference>
<dbReference type="HAMAP" id="MF_00801">
    <property type="entry name" value="Endonuclease_5"/>
    <property type="match status" value="1"/>
</dbReference>
<dbReference type="InterPro" id="IPR007581">
    <property type="entry name" value="Endonuclease-V"/>
</dbReference>
<dbReference type="NCBIfam" id="NF008629">
    <property type="entry name" value="PRK11617.1"/>
    <property type="match status" value="1"/>
</dbReference>
<dbReference type="PANTHER" id="PTHR28511">
    <property type="entry name" value="ENDONUCLEASE V"/>
    <property type="match status" value="1"/>
</dbReference>
<dbReference type="PANTHER" id="PTHR28511:SF1">
    <property type="entry name" value="ENDONUCLEASE V"/>
    <property type="match status" value="1"/>
</dbReference>
<dbReference type="Pfam" id="PF04493">
    <property type="entry name" value="Endonuclease_5"/>
    <property type="match status" value="1"/>
</dbReference>
<comment type="function">
    <text evidence="1">DNA repair enzyme involved in the repair of deaminated bases. Selectively cleaves double-stranded DNA at the second phosphodiester bond 3' to a deoxyinosine leaving behind the intact lesion on the nicked DNA.</text>
</comment>
<comment type="catalytic activity">
    <reaction evidence="1">
        <text>Endonucleolytic cleavage at apurinic or apyrimidinic sites to products with a 5'-phosphate.</text>
        <dbReference type="EC" id="3.1.21.7"/>
    </reaction>
</comment>
<comment type="cofactor">
    <cofactor evidence="1">
        <name>Mg(2+)</name>
        <dbReference type="ChEBI" id="CHEBI:18420"/>
    </cofactor>
</comment>
<comment type="subcellular location">
    <subcellularLocation>
        <location evidence="1">Cytoplasm</location>
    </subcellularLocation>
</comment>
<comment type="similarity">
    <text evidence="1">Belongs to the endonuclease V family.</text>
</comment>
<name>NFI_SHIB3</name>
<protein>
    <recommendedName>
        <fullName evidence="1">Endonuclease V</fullName>
        <ecNumber evidence="1">3.1.21.7</ecNumber>
    </recommendedName>
    <alternativeName>
        <fullName evidence="1">Deoxyinosine 3'endonuclease</fullName>
    </alternativeName>
    <alternativeName>
        <fullName evidence="1">Deoxyribonuclease V</fullName>
        <shortName evidence="1">DNase V</shortName>
    </alternativeName>
</protein>
<gene>
    <name evidence="1" type="primary">nfi</name>
    <name type="ordered locus">SbBS512_E4489</name>
</gene>
<sequence>MDLASLRAQQIELASSVIREDRLDKDPPDLIAGADVGFEQGGEVTRAAMVLLKYPSLELVEYKVARIATTMPYIPGFLSFREYPALLAAWEMLSQKPDLVFVDGHGISHPRRLGVASHFGLMVDVPTIGVAKKRLCGKFEPLSSEPGALAPLMDKGEQLAWVWRSKARCNPLFIATGHRVSVDSALAWVQRCMKGYRLPEPTRWADAVASERPAFVRYTANQP</sequence>
<feature type="chain" id="PRO_1000133891" description="Endonuclease V">
    <location>
        <begin position="1"/>
        <end position="223"/>
    </location>
</feature>
<feature type="binding site" evidence="1">
    <location>
        <position position="35"/>
    </location>
    <ligand>
        <name>Mg(2+)</name>
        <dbReference type="ChEBI" id="CHEBI:18420"/>
    </ligand>
</feature>
<feature type="binding site" evidence="1">
    <location>
        <position position="103"/>
    </location>
    <ligand>
        <name>Mg(2+)</name>
        <dbReference type="ChEBI" id="CHEBI:18420"/>
    </ligand>
</feature>
<feature type="site" description="Interaction with target DNA" evidence="1">
    <location>
        <position position="73"/>
    </location>
</feature>
<evidence type="ECO:0000255" key="1">
    <source>
        <dbReference type="HAMAP-Rule" id="MF_00801"/>
    </source>
</evidence>
<organism>
    <name type="scientific">Shigella boydii serotype 18 (strain CDC 3083-94 / BS512)</name>
    <dbReference type="NCBI Taxonomy" id="344609"/>
    <lineage>
        <taxon>Bacteria</taxon>
        <taxon>Pseudomonadati</taxon>
        <taxon>Pseudomonadota</taxon>
        <taxon>Gammaproteobacteria</taxon>
        <taxon>Enterobacterales</taxon>
        <taxon>Enterobacteriaceae</taxon>
        <taxon>Shigella</taxon>
    </lineage>
</organism>
<reference key="1">
    <citation type="submission" date="2008-05" db="EMBL/GenBank/DDBJ databases">
        <title>Complete sequence of Shigella boydii serotype 18 strain BS512.</title>
        <authorList>
            <person name="Rasko D.A."/>
            <person name="Rosovitz M."/>
            <person name="Maurelli A.T."/>
            <person name="Myers G."/>
            <person name="Seshadri R."/>
            <person name="Cer R."/>
            <person name="Jiang L."/>
            <person name="Ravel J."/>
            <person name="Sebastian Y."/>
        </authorList>
    </citation>
    <scope>NUCLEOTIDE SEQUENCE [LARGE SCALE GENOMIC DNA]</scope>
    <source>
        <strain>CDC 3083-94 / BS512</strain>
    </source>
</reference>